<reference key="1">
    <citation type="journal article" date="1999" name="Biochim. Biophys. Acta">
        <title>Isolation and characterization of a novel human gene (HFB30) which encodes a protein with a RING finger motif.</title>
        <authorList>
            <person name="Ueki N."/>
            <person name="Seki N."/>
            <person name="Yano K."/>
            <person name="Masuho Y."/>
            <person name="Saito T."/>
            <person name="Muramatsu M.-A."/>
        </authorList>
    </citation>
    <scope>NUCLEOTIDE SEQUENCE [MRNA] (ISOFORM 1)</scope>
    <source>
        <tissue>Fetal brain</tissue>
    </source>
</reference>
<reference key="2">
    <citation type="journal article" date="1999" name="J. Biol. Chem.">
        <title>Cloning and characterization of human prostate coactivator ARA54, a novel protein that associates with the androgen receptor.</title>
        <authorList>
            <person name="Kang H.-Y."/>
            <person name="Yeh S."/>
            <person name="Fujimoto N."/>
            <person name="Chang C."/>
        </authorList>
    </citation>
    <scope>NUCLEOTIDE SEQUENCE [MRNA] (ISOFORM 1)</scope>
    <scope>INTERACTION WITH AR</scope>
    <scope>TISSUE SPECIFICITY</scope>
    <source>
        <tissue>Prostate</tissue>
    </source>
</reference>
<reference key="3">
    <citation type="journal article" date="2004" name="Nat. Genet.">
        <title>Complete sequencing and characterization of 21,243 full-length human cDNAs.</title>
        <authorList>
            <person name="Ota T."/>
            <person name="Suzuki Y."/>
            <person name="Nishikawa T."/>
            <person name="Otsuki T."/>
            <person name="Sugiyama T."/>
            <person name="Irie R."/>
            <person name="Wakamatsu A."/>
            <person name="Hayashi K."/>
            <person name="Sato H."/>
            <person name="Nagai K."/>
            <person name="Kimura K."/>
            <person name="Makita H."/>
            <person name="Sekine M."/>
            <person name="Obayashi M."/>
            <person name="Nishi T."/>
            <person name="Shibahara T."/>
            <person name="Tanaka T."/>
            <person name="Ishii S."/>
            <person name="Yamamoto J."/>
            <person name="Saito K."/>
            <person name="Kawai Y."/>
            <person name="Isono Y."/>
            <person name="Nakamura Y."/>
            <person name="Nagahari K."/>
            <person name="Murakami K."/>
            <person name="Yasuda T."/>
            <person name="Iwayanagi T."/>
            <person name="Wagatsuma M."/>
            <person name="Shiratori A."/>
            <person name="Sudo H."/>
            <person name="Hosoiri T."/>
            <person name="Kaku Y."/>
            <person name="Kodaira H."/>
            <person name="Kondo H."/>
            <person name="Sugawara M."/>
            <person name="Takahashi M."/>
            <person name="Kanda K."/>
            <person name="Yokoi T."/>
            <person name="Furuya T."/>
            <person name="Kikkawa E."/>
            <person name="Omura Y."/>
            <person name="Abe K."/>
            <person name="Kamihara K."/>
            <person name="Katsuta N."/>
            <person name="Sato K."/>
            <person name="Tanikawa M."/>
            <person name="Yamazaki M."/>
            <person name="Ninomiya K."/>
            <person name="Ishibashi T."/>
            <person name="Yamashita H."/>
            <person name="Murakawa K."/>
            <person name="Fujimori K."/>
            <person name="Tanai H."/>
            <person name="Kimata M."/>
            <person name="Watanabe M."/>
            <person name="Hiraoka S."/>
            <person name="Chiba Y."/>
            <person name="Ishida S."/>
            <person name="Ono Y."/>
            <person name="Takiguchi S."/>
            <person name="Watanabe S."/>
            <person name="Yosida M."/>
            <person name="Hotuta T."/>
            <person name="Kusano J."/>
            <person name="Kanehori K."/>
            <person name="Takahashi-Fujii A."/>
            <person name="Hara H."/>
            <person name="Tanase T.-O."/>
            <person name="Nomura Y."/>
            <person name="Togiya S."/>
            <person name="Komai F."/>
            <person name="Hara R."/>
            <person name="Takeuchi K."/>
            <person name="Arita M."/>
            <person name="Imose N."/>
            <person name="Musashino K."/>
            <person name="Yuuki H."/>
            <person name="Oshima A."/>
            <person name="Sasaki N."/>
            <person name="Aotsuka S."/>
            <person name="Yoshikawa Y."/>
            <person name="Matsunawa H."/>
            <person name="Ichihara T."/>
            <person name="Shiohata N."/>
            <person name="Sano S."/>
            <person name="Moriya S."/>
            <person name="Momiyama H."/>
            <person name="Satoh N."/>
            <person name="Takami S."/>
            <person name="Terashima Y."/>
            <person name="Suzuki O."/>
            <person name="Nakagawa S."/>
            <person name="Senoh A."/>
            <person name="Mizoguchi H."/>
            <person name="Goto Y."/>
            <person name="Shimizu F."/>
            <person name="Wakebe H."/>
            <person name="Hishigaki H."/>
            <person name="Watanabe T."/>
            <person name="Sugiyama A."/>
            <person name="Takemoto M."/>
            <person name="Kawakami B."/>
            <person name="Yamazaki M."/>
            <person name="Watanabe K."/>
            <person name="Kumagai A."/>
            <person name="Itakura S."/>
            <person name="Fukuzumi Y."/>
            <person name="Fujimori Y."/>
            <person name="Komiyama M."/>
            <person name="Tashiro H."/>
            <person name="Tanigami A."/>
            <person name="Fujiwara T."/>
            <person name="Ono T."/>
            <person name="Yamada K."/>
            <person name="Fujii Y."/>
            <person name="Ozaki K."/>
            <person name="Hirao M."/>
            <person name="Ohmori Y."/>
            <person name="Kawabata A."/>
            <person name="Hikiji T."/>
            <person name="Kobatake N."/>
            <person name="Inagaki H."/>
            <person name="Ikema Y."/>
            <person name="Okamoto S."/>
            <person name="Okitani R."/>
            <person name="Kawakami T."/>
            <person name="Noguchi S."/>
            <person name="Itoh T."/>
            <person name="Shigeta K."/>
            <person name="Senba T."/>
            <person name="Matsumura K."/>
            <person name="Nakajima Y."/>
            <person name="Mizuno T."/>
            <person name="Morinaga M."/>
            <person name="Sasaki M."/>
            <person name="Togashi T."/>
            <person name="Oyama M."/>
            <person name="Hata H."/>
            <person name="Watanabe M."/>
            <person name="Komatsu T."/>
            <person name="Mizushima-Sugano J."/>
            <person name="Satoh T."/>
            <person name="Shirai Y."/>
            <person name="Takahashi Y."/>
            <person name="Nakagawa K."/>
            <person name="Okumura K."/>
            <person name="Nagase T."/>
            <person name="Nomura N."/>
            <person name="Kikuchi H."/>
            <person name="Masuho Y."/>
            <person name="Yamashita R."/>
            <person name="Nakai K."/>
            <person name="Yada T."/>
            <person name="Nakamura Y."/>
            <person name="Ohara O."/>
            <person name="Isogai T."/>
            <person name="Sugano S."/>
        </authorList>
    </citation>
    <scope>NUCLEOTIDE SEQUENCE [LARGE SCALE MRNA] (ISOFORMS 1 AND 2)</scope>
    <source>
        <tissue>Brain</tissue>
        <tissue>Thyroid</tissue>
    </source>
</reference>
<reference key="4">
    <citation type="submission" date="2004-06" db="EMBL/GenBank/DDBJ databases">
        <title>Cloning of human full open reading frames in Gateway(TM) system entry vector (pDONR201).</title>
        <authorList>
            <person name="Ebert L."/>
            <person name="Schick M."/>
            <person name="Neubert P."/>
            <person name="Schatten R."/>
            <person name="Henze S."/>
            <person name="Korn B."/>
        </authorList>
    </citation>
    <scope>NUCLEOTIDE SEQUENCE [LARGE SCALE MRNA] (ISOFORM 1)</scope>
</reference>
<reference key="5">
    <citation type="journal article" date="2004" name="Nature">
        <title>The DNA sequence and comparative analysis of human chromosome 5.</title>
        <authorList>
            <person name="Schmutz J."/>
            <person name="Martin J."/>
            <person name="Terry A."/>
            <person name="Couronne O."/>
            <person name="Grimwood J."/>
            <person name="Lowry S."/>
            <person name="Gordon L.A."/>
            <person name="Scott D."/>
            <person name="Xie G."/>
            <person name="Huang W."/>
            <person name="Hellsten U."/>
            <person name="Tran-Gyamfi M."/>
            <person name="She X."/>
            <person name="Prabhakar S."/>
            <person name="Aerts A."/>
            <person name="Altherr M."/>
            <person name="Bajorek E."/>
            <person name="Black S."/>
            <person name="Branscomb E."/>
            <person name="Caoile C."/>
            <person name="Challacombe J.F."/>
            <person name="Chan Y.M."/>
            <person name="Denys M."/>
            <person name="Detter J.C."/>
            <person name="Escobar J."/>
            <person name="Flowers D."/>
            <person name="Fotopulos D."/>
            <person name="Glavina T."/>
            <person name="Gomez M."/>
            <person name="Gonzales E."/>
            <person name="Goodstein D."/>
            <person name="Grigoriev I."/>
            <person name="Groza M."/>
            <person name="Hammon N."/>
            <person name="Hawkins T."/>
            <person name="Haydu L."/>
            <person name="Israni S."/>
            <person name="Jett J."/>
            <person name="Kadner K."/>
            <person name="Kimball H."/>
            <person name="Kobayashi A."/>
            <person name="Lopez F."/>
            <person name="Lou Y."/>
            <person name="Martinez D."/>
            <person name="Medina C."/>
            <person name="Morgan J."/>
            <person name="Nandkeshwar R."/>
            <person name="Noonan J.P."/>
            <person name="Pitluck S."/>
            <person name="Pollard M."/>
            <person name="Predki P."/>
            <person name="Priest J."/>
            <person name="Ramirez L."/>
            <person name="Retterer J."/>
            <person name="Rodriguez A."/>
            <person name="Rogers S."/>
            <person name="Salamov A."/>
            <person name="Salazar A."/>
            <person name="Thayer N."/>
            <person name="Tice H."/>
            <person name="Tsai M."/>
            <person name="Ustaszewska A."/>
            <person name="Vo N."/>
            <person name="Wheeler J."/>
            <person name="Wu K."/>
            <person name="Yang J."/>
            <person name="Dickson M."/>
            <person name="Cheng J.-F."/>
            <person name="Eichler E.E."/>
            <person name="Olsen A."/>
            <person name="Pennacchio L.A."/>
            <person name="Rokhsar D.S."/>
            <person name="Richardson P."/>
            <person name="Lucas S.M."/>
            <person name="Myers R.M."/>
            <person name="Rubin E.M."/>
        </authorList>
    </citation>
    <scope>NUCLEOTIDE SEQUENCE [LARGE SCALE GENOMIC DNA]</scope>
</reference>
<reference key="6">
    <citation type="submission" date="2005-09" db="EMBL/GenBank/DDBJ databases">
        <authorList>
            <person name="Mural R.J."/>
            <person name="Istrail S."/>
            <person name="Sutton G.G."/>
            <person name="Florea L."/>
            <person name="Halpern A.L."/>
            <person name="Mobarry C.M."/>
            <person name="Lippert R."/>
            <person name="Walenz B."/>
            <person name="Shatkay H."/>
            <person name="Dew I."/>
            <person name="Miller J.R."/>
            <person name="Flanigan M.J."/>
            <person name="Edwards N.J."/>
            <person name="Bolanos R."/>
            <person name="Fasulo D."/>
            <person name="Halldorsson B.V."/>
            <person name="Hannenhalli S."/>
            <person name="Turner R."/>
            <person name="Yooseph S."/>
            <person name="Lu F."/>
            <person name="Nusskern D.R."/>
            <person name="Shue B.C."/>
            <person name="Zheng X.H."/>
            <person name="Zhong F."/>
            <person name="Delcher A.L."/>
            <person name="Huson D.H."/>
            <person name="Kravitz S.A."/>
            <person name="Mouchard L."/>
            <person name="Reinert K."/>
            <person name="Remington K.A."/>
            <person name="Clark A.G."/>
            <person name="Waterman M.S."/>
            <person name="Eichler E.E."/>
            <person name="Adams M.D."/>
            <person name="Hunkapiller M.W."/>
            <person name="Myers E.W."/>
            <person name="Venter J.C."/>
        </authorList>
    </citation>
    <scope>NUCLEOTIDE SEQUENCE [LARGE SCALE GENOMIC DNA]</scope>
</reference>
<reference key="7">
    <citation type="journal article" date="2004" name="Genome Res.">
        <title>The status, quality, and expansion of the NIH full-length cDNA project: the Mammalian Gene Collection (MGC).</title>
        <authorList>
            <consortium name="The MGC Project Team"/>
        </authorList>
    </citation>
    <scope>NUCLEOTIDE SEQUENCE [LARGE SCALE MRNA] (ISOFORM 1)</scope>
</reference>
<reference key="8">
    <citation type="journal article" date="1998" name="Nat. Biotechnol.">
        <title>Selection system for genes encoding nuclear-targeted proteins.</title>
        <authorList>
            <person name="Ueki N."/>
            <person name="Oda T."/>
            <person name="Kondo M."/>
            <person name="Yano K."/>
            <person name="Noguchi T."/>
            <person name="Muramatsu M.-A."/>
        </authorList>
    </citation>
    <scope>NUCLEOTIDE SEQUENCE [LARGE SCALE MRNA] OF 286-474 (ISOFORM 1)</scope>
    <scope>SUBCELLULAR LOCATION</scope>
    <source>
        <tissue>Fetal brain</tissue>
    </source>
</reference>
<reference key="9">
    <citation type="journal article" date="2001" name="Eur. J. Biochem.">
        <title>N-terminally extended human ubiquitin-conjugating enzymes (E2s) mediate the ubiquitination of RING-finger proteins, ARA54 and RNF8.</title>
        <authorList>
            <person name="Ito K."/>
            <person name="Adachi S."/>
            <person name="Iwakami R."/>
            <person name="Yasuda H."/>
            <person name="Muto Y."/>
            <person name="Seki N."/>
            <person name="Okano Y."/>
        </authorList>
    </citation>
    <scope>INTERACTION WITH UBE2E1 AND UBE2E2</scope>
    <scope>AUTOUBIQUITINATION</scope>
    <scope>MUTAGENESIS OF CYS-220</scope>
</reference>
<reference key="10">
    <citation type="journal article" date="2008" name="Proc. Natl. Acad. Sci. U.S.A.">
        <title>A quantitative atlas of mitotic phosphorylation.</title>
        <authorList>
            <person name="Dephoure N."/>
            <person name="Zhou C."/>
            <person name="Villen J."/>
            <person name="Beausoleil S.A."/>
            <person name="Bakalarski C.E."/>
            <person name="Elledge S.J."/>
            <person name="Gygi S.P."/>
        </authorList>
    </citation>
    <scope>PHOSPHORYLATION [LARGE SCALE ANALYSIS] AT SER-348</scope>
    <scope>IDENTIFICATION BY MASS SPECTROMETRY [LARGE SCALE ANALYSIS]</scope>
    <source>
        <tissue>Cervix carcinoma</tissue>
    </source>
</reference>
<reference key="11">
    <citation type="journal article" date="2009" name="Cancer Cell">
        <title>Regulation of androgen receptor transcriptional activity and specificity by RNF6-induced ubiquitination.</title>
        <authorList>
            <person name="Xu K."/>
            <person name="Shimelis H."/>
            <person name="Linn D.E."/>
            <person name="Jiang R."/>
            <person name="Yang X."/>
            <person name="Sun F."/>
            <person name="Guo Z."/>
            <person name="Chen H."/>
            <person name="Li W."/>
            <person name="Chen H."/>
            <person name="Kong X."/>
            <person name="Melamed J."/>
            <person name="Fang S."/>
            <person name="Xiao Z."/>
            <person name="Veenstra T.D."/>
            <person name="Qiu Y."/>
        </authorList>
    </citation>
    <scope>FUNCTION</scope>
    <scope>INTERACTION WITH AR</scope>
</reference>
<reference key="12">
    <citation type="journal article" date="2009" name="Sci. Signal.">
        <title>Quantitative phosphoproteomic analysis of T cell receptor signaling reveals system-wide modulation of protein-protein interactions.</title>
        <authorList>
            <person name="Mayya V."/>
            <person name="Lundgren D.H."/>
            <person name="Hwang S.-I."/>
            <person name="Rezaul K."/>
            <person name="Wu L."/>
            <person name="Eng J.K."/>
            <person name="Rodionov V."/>
            <person name="Han D.K."/>
        </authorList>
    </citation>
    <scope>IDENTIFICATION BY MASS SPECTROMETRY [LARGE SCALE ANALYSIS]</scope>
    <source>
        <tissue>Leukemic T-cell</tissue>
    </source>
</reference>
<reference key="13">
    <citation type="journal article" date="2013" name="EMBO Rep.">
        <title>Ring Finger Protein 14 is a new regulator of TCF/beta-catenin-mediated transcription and colon cancer cell survival.</title>
        <authorList>
            <person name="Wu B."/>
            <person name="Piloto S."/>
            <person name="Zeng W."/>
            <person name="Hoverter N.P."/>
            <person name="Schilling T.F."/>
            <person name="Waterman M.L."/>
        </authorList>
    </citation>
    <scope>FUNCTION</scope>
    <scope>INTERACTION WITH TCF7; TCF7L1 AND TCF7L2</scope>
</reference>
<reference key="14">
    <citation type="journal article" date="2013" name="J. Proteome Res.">
        <title>Toward a comprehensive characterization of a human cancer cell phosphoproteome.</title>
        <authorList>
            <person name="Zhou H."/>
            <person name="Di Palma S."/>
            <person name="Preisinger C."/>
            <person name="Peng M."/>
            <person name="Polat A.N."/>
            <person name="Heck A.J."/>
            <person name="Mohammed S."/>
        </authorList>
    </citation>
    <scope>PHOSPHORYLATION [LARGE SCALE ANALYSIS] AT SER-348</scope>
    <scope>IDENTIFICATION BY MASS SPECTROMETRY [LARGE SCALE ANALYSIS]</scope>
    <source>
        <tissue>Erythroleukemia</tissue>
    </source>
</reference>
<reference key="15">
    <citation type="journal article" date="2023" name="Cell">
        <title>An E3 ligase network engages GCN1 to promote the degradation of translation factors on stalled ribosomes.</title>
        <authorList>
            <person name="Oltion K."/>
            <person name="Carelli J.D."/>
            <person name="Yang T."/>
            <person name="See S.K."/>
            <person name="Wang H.Y."/>
            <person name="Kampmann M."/>
            <person name="Taunton J."/>
        </authorList>
    </citation>
    <scope>FUNCTION</scope>
    <scope>CATALYTIC ACTIVITY</scope>
    <scope>PATHWAY</scope>
    <scope>ACTIVE SITE</scope>
    <scope>INTERACTION WITH GCN1</scope>
    <scope>MUTAGENESIS OF CYS-417</scope>
</reference>
<reference key="16">
    <citation type="journal article" date="2023" name="Cell Rep.">
        <title>Drug-induced eRF1 degradation promotes readthrough and reveals a new branch of ribosome quality control.</title>
        <authorList>
            <person name="Gurzeler L.A."/>
            <person name="Link M."/>
            <person name="Ibig Y."/>
            <person name="Schmidt I."/>
            <person name="Galuba O."/>
            <person name="Schoenbett J."/>
            <person name="Gasser-Didierlaurant C."/>
            <person name="Parker C.N."/>
            <person name="Mao X."/>
            <person name="Bitsch F."/>
            <person name="Schirle M."/>
            <person name="Couttet P."/>
            <person name="Sigoillot F."/>
            <person name="Ziegelmueller J."/>
            <person name="Uldry A.C."/>
            <person name="Teodorowicz W."/>
            <person name="Schmiedeberg N."/>
            <person name="Muehlemann O."/>
            <person name="Reinhardt J."/>
        </authorList>
    </citation>
    <scope>FUNCTION</scope>
    <scope>CATALYTIC ACTIVITY</scope>
    <scope>PATHWAY</scope>
    <scope>MUTAGENESIS OF CYS-220</scope>
</reference>
<reference key="17">
    <citation type="journal article" date="2023" name="Mol. Cell">
        <title>K6-linked ubiquitylation marks formaldehyde-induced RNA-protein crosslinks for resolution.</title>
        <authorList>
            <person name="Suryo Rahmanto A."/>
            <person name="Blum C.J."/>
            <person name="Scalera C."/>
            <person name="Heidelberger J.B."/>
            <person name="Mesitov M."/>
            <person name="Horn-Ghetko D."/>
            <person name="Graef J.F."/>
            <person name="Mikicic I."/>
            <person name="Hobrecht R."/>
            <person name="Orekhova A."/>
            <person name="Ostermaier M."/>
            <person name="Ebersberger S."/>
            <person name="Moeckel M.M."/>
            <person name="Krapoth N."/>
            <person name="Da Silva Fernandes N."/>
            <person name="Mizi A."/>
            <person name="Zhu Y."/>
            <person name="Chen J.X."/>
            <person name="Choudhary C."/>
            <person name="Papantonis A."/>
            <person name="Ulrich H.D."/>
            <person name="Schulman B.A."/>
            <person name="Koenig J."/>
            <person name="Beli P."/>
        </authorList>
    </citation>
    <scope>FUNCTION</scope>
    <scope>CATALYTIC ACTIVITY</scope>
    <scope>PATHWAY</scope>
</reference>
<reference key="18">
    <citation type="journal article" date="2023" name="Mol. Cell">
        <title>RNF14-dependent atypical ubiquitylation promotes translation-coupled resolution of RNA-protein crosslinks.</title>
        <authorList>
            <person name="Zhao S."/>
            <person name="Cordes J."/>
            <person name="Caban K.M."/>
            <person name="Goetz M.J."/>
            <person name="Mackens-Kiani T."/>
            <person name="Veltri A.J."/>
            <person name="Sinha N.K."/>
            <person name="Weickert P."/>
            <person name="Kaya S."/>
            <person name="Hewitt G."/>
            <person name="Nedialkova D.D."/>
            <person name="Froehlich T."/>
            <person name="Beckmann R."/>
            <person name="Buskirk A.R."/>
            <person name="Green R."/>
            <person name="Stingele J."/>
        </authorList>
    </citation>
    <scope>FUNCTION</scope>
    <scope>CATALYTIC ACTIVITY</scope>
    <scope>PATHWAY</scope>
</reference>
<dbReference type="EC" id="2.3.2.31" evidence="9 10 11 12"/>
<dbReference type="EMBL" id="AB022663">
    <property type="protein sequence ID" value="BAA78677.1"/>
    <property type="molecule type" value="mRNA"/>
</dbReference>
<dbReference type="EMBL" id="AF060544">
    <property type="protein sequence ID" value="AAD21842.1"/>
    <property type="molecule type" value="mRNA"/>
</dbReference>
<dbReference type="EMBL" id="AK023884">
    <property type="protein sequence ID" value="BAG51234.1"/>
    <property type="molecule type" value="mRNA"/>
</dbReference>
<dbReference type="EMBL" id="AK057868">
    <property type="status" value="NOT_ANNOTATED_CDS"/>
    <property type="molecule type" value="mRNA"/>
</dbReference>
<dbReference type="EMBL" id="CR456702">
    <property type="protein sequence ID" value="CAG32983.1"/>
    <property type="molecule type" value="mRNA"/>
</dbReference>
<dbReference type="EMBL" id="AC005740">
    <property type="status" value="NOT_ANNOTATED_CDS"/>
    <property type="molecule type" value="Genomic_DNA"/>
</dbReference>
<dbReference type="EMBL" id="CH471062">
    <property type="protein sequence ID" value="EAW61895.1"/>
    <property type="molecule type" value="Genomic_DNA"/>
</dbReference>
<dbReference type="EMBL" id="CH471062">
    <property type="protein sequence ID" value="EAW61896.1"/>
    <property type="molecule type" value="Genomic_DNA"/>
</dbReference>
<dbReference type="EMBL" id="CH471062">
    <property type="protein sequence ID" value="EAW61897.1"/>
    <property type="molecule type" value="Genomic_DNA"/>
</dbReference>
<dbReference type="EMBL" id="BC126185">
    <property type="protein sequence ID" value="AAI26186.1"/>
    <property type="molecule type" value="mRNA"/>
</dbReference>
<dbReference type="EMBL" id="BC144061">
    <property type="protein sequence ID" value="AAI44062.1"/>
    <property type="molecule type" value="mRNA"/>
</dbReference>
<dbReference type="EMBL" id="AB015333">
    <property type="protein sequence ID" value="BAA34792.1"/>
    <property type="molecule type" value="mRNA"/>
</dbReference>
<dbReference type="CCDS" id="CCDS4270.1">
    <molecule id="Q9UBS8-1"/>
</dbReference>
<dbReference type="CCDS" id="CCDS4271.1">
    <molecule id="Q9UBS8-2"/>
</dbReference>
<dbReference type="RefSeq" id="NP_001188294.1">
    <molecule id="Q9UBS8-1"/>
    <property type="nucleotide sequence ID" value="NM_001201365.2"/>
</dbReference>
<dbReference type="RefSeq" id="NP_004281.1">
    <molecule id="Q9UBS8-1"/>
    <property type="nucleotide sequence ID" value="NM_004290.5"/>
</dbReference>
<dbReference type="RefSeq" id="NP_899645.1">
    <molecule id="Q9UBS8-2"/>
    <property type="nucleotide sequence ID" value="NM_183398.3"/>
</dbReference>
<dbReference type="RefSeq" id="NP_899646.1">
    <molecule id="Q9UBS8-1"/>
    <property type="nucleotide sequence ID" value="NM_183399.3"/>
</dbReference>
<dbReference type="RefSeq" id="NP_899647.1">
    <molecule id="Q9UBS8-1"/>
    <property type="nucleotide sequence ID" value="NM_183400.3"/>
</dbReference>
<dbReference type="RefSeq" id="NP_899648.1">
    <molecule id="Q9UBS8-1"/>
    <property type="nucleotide sequence ID" value="NM_183401.3"/>
</dbReference>
<dbReference type="RefSeq" id="XP_005268593.1">
    <property type="nucleotide sequence ID" value="XM_005268536.2"/>
</dbReference>
<dbReference type="RefSeq" id="XP_005268594.1">
    <property type="nucleotide sequence ID" value="XM_005268537.2"/>
</dbReference>
<dbReference type="RefSeq" id="XP_005268596.1">
    <property type="nucleotide sequence ID" value="XM_005268539.2"/>
</dbReference>
<dbReference type="RefSeq" id="XP_005268597.1">
    <property type="nucleotide sequence ID" value="XM_005268540.3"/>
</dbReference>
<dbReference type="RefSeq" id="XP_005268598.1">
    <property type="nucleotide sequence ID" value="XM_005268541.3"/>
</dbReference>
<dbReference type="RefSeq" id="XP_011536016.1">
    <molecule id="Q9UBS8-1"/>
    <property type="nucleotide sequence ID" value="XM_011537714.4"/>
</dbReference>
<dbReference type="RefSeq" id="XP_016865559.1">
    <property type="nucleotide sequence ID" value="XM_017010070.1"/>
</dbReference>
<dbReference type="RefSeq" id="XP_016865560.1">
    <property type="nucleotide sequence ID" value="XM_017010071.1"/>
</dbReference>
<dbReference type="RefSeq" id="XP_016865561.1">
    <property type="nucleotide sequence ID" value="XM_017010072.1"/>
</dbReference>
<dbReference type="RefSeq" id="XP_047273854.1">
    <molecule id="Q9UBS8-1"/>
    <property type="nucleotide sequence ID" value="XM_047417898.1"/>
</dbReference>
<dbReference type="RefSeq" id="XP_047273855.1">
    <molecule id="Q9UBS8-1"/>
    <property type="nucleotide sequence ID" value="XM_047417899.1"/>
</dbReference>
<dbReference type="RefSeq" id="XP_047273856.1">
    <molecule id="Q9UBS8-1"/>
    <property type="nucleotide sequence ID" value="XM_047417900.1"/>
</dbReference>
<dbReference type="RefSeq" id="XP_047273857.1">
    <molecule id="Q9UBS8-1"/>
    <property type="nucleotide sequence ID" value="XM_047417901.1"/>
</dbReference>
<dbReference type="RefSeq" id="XP_047273858.1">
    <molecule id="Q9UBS8-1"/>
    <property type="nucleotide sequence ID" value="XM_047417902.1"/>
</dbReference>
<dbReference type="RefSeq" id="XP_047273859.1">
    <molecule id="Q9UBS8-1"/>
    <property type="nucleotide sequence ID" value="XM_047417903.1"/>
</dbReference>
<dbReference type="RefSeq" id="XP_047273860.1">
    <molecule id="Q9UBS8-1"/>
    <property type="nucleotide sequence ID" value="XM_047417904.1"/>
</dbReference>
<dbReference type="RefSeq" id="XP_047273861.1">
    <molecule id="Q9UBS8-1"/>
    <property type="nucleotide sequence ID" value="XM_047417905.1"/>
</dbReference>
<dbReference type="RefSeq" id="XP_054209813.1">
    <molecule id="Q9UBS8-1"/>
    <property type="nucleotide sequence ID" value="XM_054353838.1"/>
</dbReference>
<dbReference type="RefSeq" id="XP_054209814.1">
    <molecule id="Q9UBS8-1"/>
    <property type="nucleotide sequence ID" value="XM_054353839.1"/>
</dbReference>
<dbReference type="RefSeq" id="XP_054209815.1">
    <molecule id="Q9UBS8-1"/>
    <property type="nucleotide sequence ID" value="XM_054353840.1"/>
</dbReference>
<dbReference type="RefSeq" id="XP_054209816.1">
    <molecule id="Q9UBS8-1"/>
    <property type="nucleotide sequence ID" value="XM_054353841.1"/>
</dbReference>
<dbReference type="RefSeq" id="XP_054209817.1">
    <molecule id="Q9UBS8-1"/>
    <property type="nucleotide sequence ID" value="XM_054353842.1"/>
</dbReference>
<dbReference type="RefSeq" id="XP_054209818.1">
    <molecule id="Q9UBS8-1"/>
    <property type="nucleotide sequence ID" value="XM_054353843.1"/>
</dbReference>
<dbReference type="RefSeq" id="XP_054209819.1">
    <molecule id="Q9UBS8-1"/>
    <property type="nucleotide sequence ID" value="XM_054353844.1"/>
</dbReference>
<dbReference type="RefSeq" id="XP_054209820.1">
    <molecule id="Q9UBS8-1"/>
    <property type="nucleotide sequence ID" value="XM_054353845.1"/>
</dbReference>
<dbReference type="RefSeq" id="XP_054209821.1">
    <molecule id="Q9UBS8-1"/>
    <property type="nucleotide sequence ID" value="XM_054353846.1"/>
</dbReference>
<dbReference type="BioGRID" id="114968">
    <property type="interactions" value="45"/>
</dbReference>
<dbReference type="CORUM" id="Q9UBS8"/>
<dbReference type="FunCoup" id="Q9UBS8">
    <property type="interactions" value="1988"/>
</dbReference>
<dbReference type="IntAct" id="Q9UBS8">
    <property type="interactions" value="27"/>
</dbReference>
<dbReference type="MINT" id="Q9UBS8"/>
<dbReference type="STRING" id="9606.ENSP00000324956"/>
<dbReference type="GlyGen" id="Q9UBS8">
    <property type="glycosylation" value="2 sites, 1 O-linked glycan (1 site)"/>
</dbReference>
<dbReference type="iPTMnet" id="Q9UBS8"/>
<dbReference type="PhosphoSitePlus" id="Q9UBS8"/>
<dbReference type="BioMuta" id="RNF14"/>
<dbReference type="DMDM" id="17380293"/>
<dbReference type="jPOST" id="Q9UBS8"/>
<dbReference type="MassIVE" id="Q9UBS8"/>
<dbReference type="PaxDb" id="9606-ENSP00000378028"/>
<dbReference type="PeptideAtlas" id="Q9UBS8"/>
<dbReference type="ProteomicsDB" id="2057"/>
<dbReference type="ProteomicsDB" id="84052">
    <molecule id="Q9UBS8-1"/>
</dbReference>
<dbReference type="Pumba" id="Q9UBS8"/>
<dbReference type="Antibodypedia" id="1304">
    <property type="antibodies" value="262 antibodies from 29 providers"/>
</dbReference>
<dbReference type="DNASU" id="9604"/>
<dbReference type="Ensembl" id="ENST00000347642.7">
    <molecule id="Q9UBS8-1"/>
    <property type="protein sequence ID" value="ENSP00000324956.3"/>
    <property type="gene ID" value="ENSG00000013561.18"/>
</dbReference>
<dbReference type="Ensembl" id="ENST00000356143.5">
    <molecule id="Q9UBS8-1"/>
    <property type="protein sequence ID" value="ENSP00000348462.1"/>
    <property type="gene ID" value="ENSG00000013561.18"/>
</dbReference>
<dbReference type="Ensembl" id="ENST00000394514.6">
    <molecule id="Q9UBS8-2"/>
    <property type="protein sequence ID" value="ENSP00000378022.2"/>
    <property type="gene ID" value="ENSG00000013561.18"/>
</dbReference>
<dbReference type="Ensembl" id="ENST00000394519.5">
    <molecule id="Q9UBS8-1"/>
    <property type="protein sequence ID" value="ENSP00000378027.1"/>
    <property type="gene ID" value="ENSG00000013561.18"/>
</dbReference>
<dbReference type="Ensembl" id="ENST00000394520.7">
    <molecule id="Q9UBS8-1"/>
    <property type="protein sequence ID" value="ENSP00000378028.2"/>
    <property type="gene ID" value="ENSG00000013561.18"/>
</dbReference>
<dbReference type="GeneID" id="9604"/>
<dbReference type="KEGG" id="hsa:9604"/>
<dbReference type="MANE-Select" id="ENST00000394520.7">
    <property type="protein sequence ID" value="ENSP00000378028.2"/>
    <property type="RefSeq nucleotide sequence ID" value="NM_004290.5"/>
    <property type="RefSeq protein sequence ID" value="NP_004281.1"/>
</dbReference>
<dbReference type="UCSC" id="uc003lly.4">
    <molecule id="Q9UBS8-1"/>
    <property type="organism name" value="human"/>
</dbReference>
<dbReference type="AGR" id="HGNC:10058"/>
<dbReference type="CTD" id="9604"/>
<dbReference type="DisGeNET" id="9604"/>
<dbReference type="GeneCards" id="RNF14"/>
<dbReference type="HGNC" id="HGNC:10058">
    <property type="gene designation" value="RNF14"/>
</dbReference>
<dbReference type="HPA" id="ENSG00000013561">
    <property type="expression patterns" value="Low tissue specificity"/>
</dbReference>
<dbReference type="MalaCards" id="RNF14"/>
<dbReference type="MIM" id="605675">
    <property type="type" value="gene"/>
</dbReference>
<dbReference type="neXtProt" id="NX_Q9UBS8"/>
<dbReference type="OpenTargets" id="ENSG00000013561"/>
<dbReference type="PharmGKB" id="PA34423"/>
<dbReference type="VEuPathDB" id="HostDB:ENSG00000013561"/>
<dbReference type="eggNOG" id="KOG1814">
    <property type="taxonomic scope" value="Eukaryota"/>
</dbReference>
<dbReference type="GeneTree" id="ENSGT00940000154507"/>
<dbReference type="HOGENOM" id="CLU_021364_2_0_1"/>
<dbReference type="InParanoid" id="Q9UBS8"/>
<dbReference type="OMA" id="PRSWCQG"/>
<dbReference type="OrthoDB" id="1431934at2759"/>
<dbReference type="PAN-GO" id="Q9UBS8">
    <property type="GO annotations" value="7 GO annotations based on evolutionary models"/>
</dbReference>
<dbReference type="PhylomeDB" id="Q9UBS8"/>
<dbReference type="TreeFam" id="TF314401"/>
<dbReference type="PathwayCommons" id="Q9UBS8"/>
<dbReference type="Reactome" id="R-HSA-983168">
    <property type="pathway name" value="Antigen processing: Ubiquitination &amp; Proteasome degradation"/>
</dbReference>
<dbReference type="SignaLink" id="Q9UBS8"/>
<dbReference type="SIGNOR" id="Q9UBS8"/>
<dbReference type="UniPathway" id="UPA00143"/>
<dbReference type="BioGRID-ORCS" id="9604">
    <property type="hits" value="253 hits in 1174 CRISPR screens"/>
</dbReference>
<dbReference type="ChiTaRS" id="RNF14">
    <property type="organism name" value="human"/>
</dbReference>
<dbReference type="GeneWiki" id="RNF14"/>
<dbReference type="GenomeRNAi" id="9604"/>
<dbReference type="Pharos" id="Q9UBS8">
    <property type="development level" value="Tbio"/>
</dbReference>
<dbReference type="PRO" id="PR:Q9UBS8"/>
<dbReference type="Proteomes" id="UP000005640">
    <property type="component" value="Chromosome 5"/>
</dbReference>
<dbReference type="RNAct" id="Q9UBS8">
    <property type="molecule type" value="protein"/>
</dbReference>
<dbReference type="Bgee" id="ENSG00000013561">
    <property type="expression patterns" value="Expressed in adrenal tissue and 207 other cell types or tissues"/>
</dbReference>
<dbReference type="ExpressionAtlas" id="Q9UBS8">
    <property type="expression patterns" value="baseline and differential"/>
</dbReference>
<dbReference type="GO" id="GO:0005737">
    <property type="term" value="C:cytoplasm"/>
    <property type="evidence" value="ECO:0000314"/>
    <property type="project" value="UniProtKB"/>
</dbReference>
<dbReference type="GO" id="GO:0005829">
    <property type="term" value="C:cytosol"/>
    <property type="evidence" value="ECO:0000314"/>
    <property type="project" value="HPA"/>
</dbReference>
<dbReference type="GO" id="GO:0022626">
    <property type="term" value="C:cytosolic ribosome"/>
    <property type="evidence" value="ECO:0000314"/>
    <property type="project" value="UniProt"/>
</dbReference>
<dbReference type="GO" id="GO:0005654">
    <property type="term" value="C:nucleoplasm"/>
    <property type="evidence" value="ECO:0000314"/>
    <property type="project" value="HPA"/>
</dbReference>
<dbReference type="GO" id="GO:0005634">
    <property type="term" value="C:nucleus"/>
    <property type="evidence" value="ECO:0000314"/>
    <property type="project" value="UniProtKB"/>
</dbReference>
<dbReference type="GO" id="GO:0000151">
    <property type="term" value="C:ubiquitin ligase complex"/>
    <property type="evidence" value="ECO:0000318"/>
    <property type="project" value="GO_Central"/>
</dbReference>
<dbReference type="GO" id="GO:0050681">
    <property type="term" value="F:nuclear androgen receptor binding"/>
    <property type="evidence" value="ECO:0000353"/>
    <property type="project" value="UniProtKB"/>
</dbReference>
<dbReference type="GO" id="GO:0003713">
    <property type="term" value="F:transcription coactivator activity"/>
    <property type="evidence" value="ECO:0000304"/>
    <property type="project" value="UniProtKB"/>
</dbReference>
<dbReference type="GO" id="GO:0031624">
    <property type="term" value="F:ubiquitin conjugating enzyme binding"/>
    <property type="evidence" value="ECO:0000318"/>
    <property type="project" value="GO_Central"/>
</dbReference>
<dbReference type="GO" id="GO:0061630">
    <property type="term" value="F:ubiquitin protein ligase activity"/>
    <property type="evidence" value="ECO:0000314"/>
    <property type="project" value="UniProtKB"/>
</dbReference>
<dbReference type="GO" id="GO:0019787">
    <property type="term" value="F:ubiquitin-like protein transferase activity"/>
    <property type="evidence" value="ECO:0000314"/>
    <property type="project" value="UniProtKB"/>
</dbReference>
<dbReference type="GO" id="GO:0008270">
    <property type="term" value="F:zinc ion binding"/>
    <property type="evidence" value="ECO:0007669"/>
    <property type="project" value="UniProtKB-KW"/>
</dbReference>
<dbReference type="GO" id="GO:0030521">
    <property type="term" value="P:androgen receptor signaling pathway"/>
    <property type="evidence" value="ECO:0000303"/>
    <property type="project" value="UniProtKB"/>
</dbReference>
<dbReference type="GO" id="GO:0045893">
    <property type="term" value="P:positive regulation of DNA-templated transcription"/>
    <property type="evidence" value="ECO:0000314"/>
    <property type="project" value="UniProtKB"/>
</dbReference>
<dbReference type="GO" id="GO:0085020">
    <property type="term" value="P:protein K6-linked ubiquitination"/>
    <property type="evidence" value="ECO:0000314"/>
    <property type="project" value="UniProtKB"/>
</dbReference>
<dbReference type="GO" id="GO:0016567">
    <property type="term" value="P:protein ubiquitination"/>
    <property type="evidence" value="ECO:0000270"/>
    <property type="project" value="UniProtKB"/>
</dbReference>
<dbReference type="GO" id="GO:0160127">
    <property type="term" value="P:protein-RNA covalent cross-linking repair"/>
    <property type="evidence" value="ECO:0000314"/>
    <property type="project" value="UniProtKB"/>
</dbReference>
<dbReference type="GO" id="GO:0060765">
    <property type="term" value="P:regulation of androgen receptor signaling pathway"/>
    <property type="evidence" value="ECO:0000314"/>
    <property type="project" value="UniProtKB"/>
</dbReference>
<dbReference type="GO" id="GO:0060828">
    <property type="term" value="P:regulation of canonical Wnt signaling pathway"/>
    <property type="evidence" value="ECO:0000314"/>
    <property type="project" value="UniProtKB"/>
</dbReference>
<dbReference type="GO" id="GO:0006355">
    <property type="term" value="P:regulation of DNA-templated transcription"/>
    <property type="evidence" value="ECO:0000314"/>
    <property type="project" value="UniProtKB"/>
</dbReference>
<dbReference type="GO" id="GO:0006357">
    <property type="term" value="P:regulation of transcription by RNA polymerase II"/>
    <property type="evidence" value="ECO:0000304"/>
    <property type="project" value="UniProtKB"/>
</dbReference>
<dbReference type="GO" id="GO:0072344">
    <property type="term" value="P:rescue of stalled ribosome"/>
    <property type="evidence" value="ECO:0000314"/>
    <property type="project" value="UniProtKB"/>
</dbReference>
<dbReference type="GO" id="GO:0007165">
    <property type="term" value="P:signal transduction"/>
    <property type="evidence" value="ECO:0000304"/>
    <property type="project" value="UniProtKB"/>
</dbReference>
<dbReference type="GO" id="GO:0006511">
    <property type="term" value="P:ubiquitin-dependent protein catabolic process"/>
    <property type="evidence" value="ECO:0000314"/>
    <property type="project" value="UniProt"/>
</dbReference>
<dbReference type="CDD" id="cd20341">
    <property type="entry name" value="BRcat_RBR_RNF14"/>
    <property type="match status" value="1"/>
</dbReference>
<dbReference type="CDD" id="cd20354">
    <property type="entry name" value="Rcat_RBR_RNF14"/>
    <property type="match status" value="1"/>
</dbReference>
<dbReference type="CDD" id="cd16628">
    <property type="entry name" value="RING-HC_RBR_RNF14"/>
    <property type="match status" value="1"/>
</dbReference>
<dbReference type="CDD" id="cd23820">
    <property type="entry name" value="RWD_RNF14"/>
    <property type="match status" value="1"/>
</dbReference>
<dbReference type="FunFam" id="1.20.120.1750:FF:000011">
    <property type="entry name" value="RBR-type E3 ubiquitin transferase"/>
    <property type="match status" value="1"/>
</dbReference>
<dbReference type="FunFam" id="2.20.25.20:FF:000007">
    <property type="entry name" value="RBR-type E3 ubiquitin transferase"/>
    <property type="match status" value="1"/>
</dbReference>
<dbReference type="FunFam" id="3.10.110.10:FF:000049">
    <property type="entry name" value="RBR-type E3 ubiquitin transferase"/>
    <property type="match status" value="1"/>
</dbReference>
<dbReference type="FunFam" id="3.30.40.10:FF:000186">
    <property type="entry name" value="RBR-type E3 ubiquitin transferase"/>
    <property type="match status" value="1"/>
</dbReference>
<dbReference type="Gene3D" id="1.20.120.1750">
    <property type="match status" value="1"/>
</dbReference>
<dbReference type="Gene3D" id="2.20.25.20">
    <property type="match status" value="1"/>
</dbReference>
<dbReference type="Gene3D" id="3.10.110.10">
    <property type="entry name" value="Ubiquitin Conjugating Enzyme"/>
    <property type="match status" value="1"/>
</dbReference>
<dbReference type="Gene3D" id="3.30.40.10">
    <property type="entry name" value="Zinc/RING finger domain, C3HC4 (zinc finger)"/>
    <property type="match status" value="1"/>
</dbReference>
<dbReference type="InterPro" id="IPR031127">
    <property type="entry name" value="E3_UB_ligase_RBR"/>
</dbReference>
<dbReference type="InterPro" id="IPR002867">
    <property type="entry name" value="IBR_dom"/>
</dbReference>
<dbReference type="InterPro" id="IPR047548">
    <property type="entry name" value="Rcat_RBR_RNF14"/>
</dbReference>
<dbReference type="InterPro" id="IPR031128">
    <property type="entry name" value="RNF14_RING-HC_Zfn"/>
</dbReference>
<dbReference type="InterPro" id="IPR006575">
    <property type="entry name" value="RWD_dom"/>
</dbReference>
<dbReference type="InterPro" id="IPR044066">
    <property type="entry name" value="TRIAD_supradom"/>
</dbReference>
<dbReference type="InterPro" id="IPR016135">
    <property type="entry name" value="UBQ-conjugating_enzyme/RWD"/>
</dbReference>
<dbReference type="InterPro" id="IPR001841">
    <property type="entry name" value="Znf_RING"/>
</dbReference>
<dbReference type="InterPro" id="IPR013083">
    <property type="entry name" value="Znf_RING/FYVE/PHD"/>
</dbReference>
<dbReference type="InterPro" id="IPR017907">
    <property type="entry name" value="Znf_RING_CS"/>
</dbReference>
<dbReference type="PANTHER" id="PTHR11685">
    <property type="entry name" value="RBR FAMILY RING FINGER AND IBR DOMAIN-CONTAINING"/>
    <property type="match status" value="1"/>
</dbReference>
<dbReference type="Pfam" id="PF01485">
    <property type="entry name" value="IBR"/>
    <property type="match status" value="1"/>
</dbReference>
<dbReference type="Pfam" id="PF22191">
    <property type="entry name" value="IBR_1"/>
    <property type="match status" value="1"/>
</dbReference>
<dbReference type="Pfam" id="PF05773">
    <property type="entry name" value="RWD"/>
    <property type="match status" value="1"/>
</dbReference>
<dbReference type="SMART" id="SM00647">
    <property type="entry name" value="IBR"/>
    <property type="match status" value="2"/>
</dbReference>
<dbReference type="SMART" id="SM00591">
    <property type="entry name" value="RWD"/>
    <property type="match status" value="1"/>
</dbReference>
<dbReference type="SUPFAM" id="SSF57850">
    <property type="entry name" value="RING/U-box"/>
    <property type="match status" value="3"/>
</dbReference>
<dbReference type="SUPFAM" id="SSF54495">
    <property type="entry name" value="UBC-like"/>
    <property type="match status" value="1"/>
</dbReference>
<dbReference type="PROSITE" id="PS50908">
    <property type="entry name" value="RWD"/>
    <property type="match status" value="1"/>
</dbReference>
<dbReference type="PROSITE" id="PS51873">
    <property type="entry name" value="TRIAD"/>
    <property type="match status" value="1"/>
</dbReference>
<dbReference type="PROSITE" id="PS00518">
    <property type="entry name" value="ZF_RING_1"/>
    <property type="match status" value="1"/>
</dbReference>
<dbReference type="PROSITE" id="PS50089">
    <property type="entry name" value="ZF_RING_2"/>
    <property type="match status" value="1"/>
</dbReference>
<sequence>MSSEDREAQEDELLALASIYDGDEFRKAESVQGGETRIYLDLPQNFKIFVSGNSNECLQNSGFEYTICFLPPLVLNFELPPDYPSSSPPSFTLSGKWLSPTQLSALCKHLDNLWEEHRGSVVLFAWMQFLKEETLAYLNIVSPFELKIGSQKKVQRRTAQASPNTELDFGGAAGSDVDQEEIVDERAVQDVESLSNLIQEILDFDQAQQIKCFNSKLFLCSICFCEKLGSECMYFLECRHVYCKACLKDYFEIQIRDGQVQCLNCPEPKCPSVATPGQVKELVEAELFARYDRLLLQSSLDLMADVVYCPRPCCQLPVMQEPGCTMGICSSCNFAFCTLCRLTYHGVSPCKVTAEKLMDLRNEYLQADEANKRLLDQRYGKRVIQKALEEMESKEWLEKNSKSCPCCGTPIEKLDGCNKMTCTGCMQYFCWICMGSLSRANPYKHFNDPGSPCFNRLFYAVDVDDDIWEDEVED</sequence>
<keyword id="KW-0025">Alternative splicing</keyword>
<keyword id="KW-0175">Coiled coil</keyword>
<keyword id="KW-0963">Cytoplasm</keyword>
<keyword id="KW-0479">Metal-binding</keyword>
<keyword id="KW-0539">Nucleus</keyword>
<keyword id="KW-0597">Phosphoprotein</keyword>
<keyword id="KW-1267">Proteomics identification</keyword>
<keyword id="KW-1185">Reference proteome</keyword>
<keyword id="KW-0677">Repeat</keyword>
<keyword id="KW-0804">Transcription</keyword>
<keyword id="KW-0805">Transcription regulation</keyword>
<keyword id="KW-0808">Transferase</keyword>
<keyword id="KW-0832">Ubl conjugation</keyword>
<keyword id="KW-0833">Ubl conjugation pathway</keyword>
<keyword id="KW-0862">Zinc</keyword>
<keyword id="KW-0863">Zinc-finger</keyword>
<protein>
    <recommendedName>
        <fullName evidence="18">E3 ubiquitin-protein ligase RNF14</fullName>
        <ecNumber evidence="9 10 11 12">2.3.2.31</ecNumber>
    </recommendedName>
    <alternativeName>
        <fullName evidence="14">Androgen receptor-associated protein 54</fullName>
    </alternativeName>
    <alternativeName>
        <fullName evidence="15">HFB30</fullName>
    </alternativeName>
    <alternativeName>
        <fullName evidence="18">RING finger protein 14</fullName>
    </alternativeName>
</protein>
<organism>
    <name type="scientific">Homo sapiens</name>
    <name type="common">Human</name>
    <dbReference type="NCBI Taxonomy" id="9606"/>
    <lineage>
        <taxon>Eukaryota</taxon>
        <taxon>Metazoa</taxon>
        <taxon>Chordata</taxon>
        <taxon>Craniata</taxon>
        <taxon>Vertebrata</taxon>
        <taxon>Euteleostomi</taxon>
        <taxon>Mammalia</taxon>
        <taxon>Eutheria</taxon>
        <taxon>Euarchontoglires</taxon>
        <taxon>Primates</taxon>
        <taxon>Haplorrhini</taxon>
        <taxon>Catarrhini</taxon>
        <taxon>Hominidae</taxon>
        <taxon>Homo</taxon>
    </lineage>
</organism>
<feature type="chain" id="PRO_0000056057" description="E3 ubiquitin-protein ligase RNF14">
    <location>
        <begin position="1"/>
        <end position="474"/>
    </location>
</feature>
<feature type="domain" description="RWD" evidence="3">
    <location>
        <begin position="11"/>
        <end position="137"/>
    </location>
</feature>
<feature type="zinc finger region" description="RING-type 1" evidence="4">
    <location>
        <begin position="220"/>
        <end position="270"/>
    </location>
</feature>
<feature type="zinc finger region" description="IBR-type" evidence="4">
    <location>
        <begin position="289"/>
        <end position="350"/>
    </location>
</feature>
<feature type="zinc finger region" description="RING-type 2; atypical" evidence="4">
    <location>
        <begin position="404"/>
        <end position="433"/>
    </location>
</feature>
<feature type="region of interest" description="TRIAD supradomain" evidence="4">
    <location>
        <begin position="216"/>
        <end position="457"/>
    </location>
</feature>
<feature type="region of interest" description="Interaction with androgen receptor" evidence="7">
    <location>
        <begin position="361"/>
        <end position="474"/>
    </location>
</feature>
<feature type="coiled-coil region" evidence="2">
    <location>
        <begin position="351"/>
        <end position="395"/>
    </location>
</feature>
<feature type="short sequence motif" description="D-box" evidence="6">
    <location>
        <begin position="37"/>
        <end position="45"/>
    </location>
</feature>
<feature type="active site" evidence="4 20">
    <location>
        <position position="417"/>
    </location>
</feature>
<feature type="binding site" evidence="4">
    <location>
        <position position="220"/>
    </location>
    <ligand>
        <name>Zn(2+)</name>
        <dbReference type="ChEBI" id="CHEBI:29105"/>
        <label>1</label>
    </ligand>
</feature>
<feature type="binding site" evidence="4">
    <location>
        <position position="223"/>
    </location>
    <ligand>
        <name>Zn(2+)</name>
        <dbReference type="ChEBI" id="CHEBI:29105"/>
        <label>1</label>
    </ligand>
</feature>
<feature type="binding site" evidence="4">
    <location>
        <position position="238"/>
    </location>
    <ligand>
        <name>Zn(2+)</name>
        <dbReference type="ChEBI" id="CHEBI:29105"/>
        <label>2</label>
    </ligand>
</feature>
<feature type="binding site" evidence="4">
    <location>
        <position position="240"/>
    </location>
    <ligand>
        <name>Zn(2+)</name>
        <dbReference type="ChEBI" id="CHEBI:29105"/>
        <label>2</label>
    </ligand>
</feature>
<feature type="binding site" evidence="4">
    <location>
        <position position="243"/>
    </location>
    <ligand>
        <name>Zn(2+)</name>
        <dbReference type="ChEBI" id="CHEBI:29105"/>
        <label>1</label>
    </ligand>
</feature>
<feature type="binding site" evidence="4">
    <location>
        <position position="246"/>
    </location>
    <ligand>
        <name>Zn(2+)</name>
        <dbReference type="ChEBI" id="CHEBI:29105"/>
        <label>1</label>
    </ligand>
</feature>
<feature type="binding site" evidence="4">
    <location>
        <position position="265"/>
    </location>
    <ligand>
        <name>Zn(2+)</name>
        <dbReference type="ChEBI" id="CHEBI:29105"/>
        <label>2</label>
    </ligand>
</feature>
<feature type="binding site" evidence="4">
    <location>
        <position position="270"/>
    </location>
    <ligand>
        <name>Zn(2+)</name>
        <dbReference type="ChEBI" id="CHEBI:29105"/>
        <label>2</label>
    </ligand>
</feature>
<feature type="binding site" evidence="4">
    <location>
        <position position="309"/>
    </location>
    <ligand>
        <name>Zn(2+)</name>
        <dbReference type="ChEBI" id="CHEBI:29105"/>
        <label>3</label>
    </ligand>
</feature>
<feature type="binding site" evidence="4">
    <location>
        <position position="314"/>
    </location>
    <ligand>
        <name>Zn(2+)</name>
        <dbReference type="ChEBI" id="CHEBI:29105"/>
        <label>3</label>
    </ligand>
</feature>
<feature type="binding site" evidence="4">
    <location>
        <position position="329"/>
    </location>
    <ligand>
        <name>Zn(2+)</name>
        <dbReference type="ChEBI" id="CHEBI:29105"/>
        <label>3</label>
    </ligand>
</feature>
<feature type="binding site" evidence="4">
    <location>
        <position position="332"/>
    </location>
    <ligand>
        <name>Zn(2+)</name>
        <dbReference type="ChEBI" id="CHEBI:29105"/>
        <label>3</label>
    </ligand>
</feature>
<feature type="binding site" evidence="4">
    <location>
        <position position="337"/>
    </location>
    <ligand>
        <name>Zn(2+)</name>
        <dbReference type="ChEBI" id="CHEBI:29105"/>
        <label>4</label>
    </ligand>
</feature>
<feature type="binding site" evidence="4">
    <location>
        <position position="340"/>
    </location>
    <ligand>
        <name>Zn(2+)</name>
        <dbReference type="ChEBI" id="CHEBI:29105"/>
        <label>4</label>
    </ligand>
</feature>
<feature type="binding site" evidence="4">
    <location>
        <position position="345"/>
    </location>
    <ligand>
        <name>Zn(2+)</name>
        <dbReference type="ChEBI" id="CHEBI:29105"/>
        <label>4</label>
    </ligand>
</feature>
<feature type="binding site" evidence="4">
    <location>
        <position position="350"/>
    </location>
    <ligand>
        <name>Zn(2+)</name>
        <dbReference type="ChEBI" id="CHEBI:29105"/>
        <label>4</label>
    </ligand>
</feature>
<feature type="binding site" evidence="4">
    <location>
        <position position="404"/>
    </location>
    <ligand>
        <name>Zn(2+)</name>
        <dbReference type="ChEBI" id="CHEBI:29105"/>
        <label>5</label>
    </ligand>
</feature>
<feature type="binding site" evidence="4">
    <location>
        <position position="407"/>
    </location>
    <ligand>
        <name>Zn(2+)</name>
        <dbReference type="ChEBI" id="CHEBI:29105"/>
        <label>5</label>
    </ligand>
</feature>
<feature type="binding site" evidence="4">
    <location>
        <position position="422"/>
    </location>
    <ligand>
        <name>Zn(2+)</name>
        <dbReference type="ChEBI" id="CHEBI:29105"/>
        <label>5</label>
    </ligand>
</feature>
<feature type="binding site" evidence="4">
    <location>
        <position position="425"/>
    </location>
    <ligand>
        <name>Zn(2+)</name>
        <dbReference type="ChEBI" id="CHEBI:29105"/>
        <label>5</label>
    </ligand>
</feature>
<feature type="binding site" evidence="4">
    <location>
        <position position="430"/>
    </location>
    <ligand>
        <name>Zn(2+)</name>
        <dbReference type="ChEBI" id="CHEBI:29105"/>
        <label>6</label>
    </ligand>
</feature>
<feature type="binding site" evidence="4">
    <location>
        <position position="433"/>
    </location>
    <ligand>
        <name>Zn(2+)</name>
        <dbReference type="ChEBI" id="CHEBI:29105"/>
        <label>6</label>
    </ligand>
</feature>
<feature type="binding site" evidence="4">
    <location>
        <position position="445"/>
    </location>
    <ligand>
        <name>Zn(2+)</name>
        <dbReference type="ChEBI" id="CHEBI:29105"/>
        <label>6</label>
    </ligand>
</feature>
<feature type="binding site" evidence="4">
    <location>
        <position position="453"/>
    </location>
    <ligand>
        <name>Zn(2+)</name>
        <dbReference type="ChEBI" id="CHEBI:29105"/>
        <label>6</label>
    </ligand>
</feature>
<feature type="modified residue" description="Phosphoserine" evidence="22 23">
    <location>
        <position position="348"/>
    </location>
</feature>
<feature type="splice variant" id="VSP_045780" description="In isoform 2." evidence="16">
    <location>
        <begin position="1"/>
        <end position="126"/>
    </location>
</feature>
<feature type="mutagenesis site" description="Abolished E3 ubiquitin-protein ligase activity. Loss of interaction with UBE2E2 and of autoubiquitination." evidence="6 10">
    <original>C</original>
    <variation>S</variation>
    <location>
        <position position="220"/>
    </location>
</feature>
<feature type="mutagenesis site" description="Abolished E3 ubiquitin-protein ligase activity." evidence="9">
    <original>C</original>
    <variation>A</variation>
    <location>
        <position position="417"/>
    </location>
</feature>
<feature type="sequence conflict" description="In Ref. 4; CAG32983." evidence="18" ref="4">
    <original>Q</original>
    <variation>R</variation>
    <location>
        <position position="32"/>
    </location>
</feature>
<name>RNF14_HUMAN</name>
<gene>
    <name evidence="17 21" type="primary">RNF14</name>
    <name evidence="14" type="synonym">ARA54</name>
    <name type="ORF">HRIHFB2038</name>
</gene>
<evidence type="ECO:0000250" key="1">
    <source>
        <dbReference type="UniProtKB" id="O60260"/>
    </source>
</evidence>
<evidence type="ECO:0000255" key="2"/>
<evidence type="ECO:0000255" key="3">
    <source>
        <dbReference type="PROSITE-ProRule" id="PRU00179"/>
    </source>
</evidence>
<evidence type="ECO:0000255" key="4">
    <source>
        <dbReference type="PROSITE-ProRule" id="PRU01221"/>
    </source>
</evidence>
<evidence type="ECO:0000269" key="5">
    <source>
    </source>
</evidence>
<evidence type="ECO:0000269" key="6">
    <source>
    </source>
</evidence>
<evidence type="ECO:0000269" key="7">
    <source>
    </source>
</evidence>
<evidence type="ECO:0000269" key="8">
    <source>
    </source>
</evidence>
<evidence type="ECO:0000269" key="9">
    <source>
    </source>
</evidence>
<evidence type="ECO:0000269" key="10">
    <source>
    </source>
</evidence>
<evidence type="ECO:0000269" key="11">
    <source>
    </source>
</evidence>
<evidence type="ECO:0000269" key="12">
    <source>
    </source>
</evidence>
<evidence type="ECO:0000269" key="13">
    <source>
    </source>
</evidence>
<evidence type="ECO:0000303" key="14">
    <source>
    </source>
</evidence>
<evidence type="ECO:0000303" key="15">
    <source>
    </source>
</evidence>
<evidence type="ECO:0000303" key="16">
    <source>
    </source>
</evidence>
<evidence type="ECO:0000303" key="17">
    <source>
    </source>
</evidence>
<evidence type="ECO:0000305" key="18"/>
<evidence type="ECO:0000305" key="19">
    <source>
    </source>
</evidence>
<evidence type="ECO:0000305" key="20">
    <source>
    </source>
</evidence>
<evidence type="ECO:0000312" key="21">
    <source>
        <dbReference type="HGNC" id="HGNC:10058"/>
    </source>
</evidence>
<evidence type="ECO:0007744" key="22">
    <source>
    </source>
</evidence>
<evidence type="ECO:0007744" key="23">
    <source>
    </source>
</evidence>
<accession>Q9UBS8</accession>
<accession>A0AV26</accession>
<accession>A6NMR2</accession>
<accession>A8MTW5</accession>
<accession>B3KN72</accession>
<accession>B7ZLV2</accession>
<accession>D3DQE4</accession>
<accession>O94793</accession>
<accession>Q6IBV0</accession>
<comment type="function">
    <text evidence="7 8 9 10 11 12">E3 ubiquitin-protein ligase that plays a key role in the RNF14-RNF25 translation quality control pathway, a pathway that takes place when a ribosome has stalled during translation, and which promotes ubiquitination and degradation of translation factors on stalled ribosomes (PubMed:36638793, PubMed:37651229, PubMed:37951215, PubMed:37951216). Recruited to stalled ribosomes by the ribosome collision sensor GCN1 and mediates 'Lys-6'-linked ubiquitination of target proteins, leading to their degradation (PubMed:36638793, PubMed:37651229, PubMed:37951215, PubMed:37951216). Mediates ubiquitination of EEF1A1/eEF1A and ETF1/eRF1 translation factors on stalled ribosomes, leading to their degradation (PubMed:36638793, PubMed:37651229). Also catalyzes ubiquitination of ribosomal proteins RPL0, RPL1, RPL12, RPS13 and RPS17 (PubMed:36638793). Specifically required to resolve RNA-protein cross-links caused by reactive aldehydes, which trigger translation stress by stalling ribosomes: acts by catalying 'Lys-6'-linked ubiquitination of RNA-protein cross-links, leading to their removal by the ATP-dependent unfoldase VCP and subsequent degradation by the proteasome (PubMed:37951215, PubMed:37951216). Independently of its function in the response to stalled ribosomes, acts as a regulator of transcription in Wnt signaling via its interaction with TCF transcription factors (TCF7/TCF1, TCF7L1/TCF3 and TCF7L2/TCF4) (PubMed:23449499). May also play a role as a coactivator for androgen- and, to a lesser extent, progesterone-dependent transcription (PubMed:19345326).</text>
</comment>
<comment type="catalytic activity">
    <reaction evidence="9 10 11 12">
        <text>[E2 ubiquitin-conjugating enzyme]-S-ubiquitinyl-L-cysteine + [acceptor protein]-L-lysine = [E2 ubiquitin-conjugating enzyme]-L-cysteine + [acceptor protein]-N(6)-ubiquitinyl-L-lysine.</text>
        <dbReference type="EC" id="2.3.2.31"/>
    </reaction>
</comment>
<comment type="pathway">
    <text evidence="9 10 11 12">Protein modification; protein ubiquitination.</text>
</comment>
<comment type="subunit">
    <text evidence="5 6 7 8 9">Interacts with GCN1; interaction takes place in response to ribosome collisions and is required for ubiquitination of EEF1A1/eEF1A (PubMed:36638793). Interacts with the ubiquitin-conjugating enzymes UBE2E1 and UBE2E2 (PubMed:11322894). Interacts with AR/androgen receptor (PubMed:10085091, PubMed:19345326). Interacts with TCF7/TCF1, TCF7L1/TCF3 and TCF7L2/TCF4; promoting Wnt signaling (PubMed:23449499).</text>
</comment>
<comment type="interaction">
    <interactant intactId="EBI-2130308">
        <id>Q9UBS8</id>
    </interactant>
    <interactant intactId="EBI-608057">
        <id>P10275</id>
        <label>AR</label>
    </interactant>
    <organismsDiffer>false</organismsDiffer>
    <experiments>2</experiments>
</comment>
<comment type="interaction">
    <interactant intactId="EBI-2130308">
        <id>Q9UBS8</id>
    </interactant>
    <interactant intactId="EBI-10186082">
        <id>Q9UI36-2</id>
        <label>DACH1</label>
    </interactant>
    <organismsDiffer>false</organismsDiffer>
    <experiments>6</experiments>
</comment>
<comment type="interaction">
    <interactant intactId="EBI-2130308">
        <id>Q9UBS8</id>
    </interactant>
    <interactant intactId="EBI-747754">
        <id>P28799</id>
        <label>GRN</label>
    </interactant>
    <organismsDiffer>false</organismsDiffer>
    <experiments>3</experiments>
</comment>
<comment type="interaction">
    <interactant intactId="EBI-2130308">
        <id>Q9UBS8</id>
    </interactant>
    <interactant intactId="EBI-21251460">
        <id>O60260-5</id>
        <label>PRKN</label>
    </interactant>
    <organismsDiffer>false</organismsDiffer>
    <experiments>3</experiments>
</comment>
<comment type="interaction">
    <interactant intactId="EBI-2130308">
        <id>Q9UBS8</id>
    </interactant>
    <interactant intactId="EBI-396669">
        <id>Q9Y3C5</id>
        <label>RNF11</label>
    </interactant>
    <organismsDiffer>false</organismsDiffer>
    <experiments>3</experiments>
</comment>
<comment type="interaction">
    <interactant intactId="EBI-2130308">
        <id>Q9UBS8</id>
    </interactant>
    <interactant intactId="EBI-372899">
        <id>Q13148</id>
        <label>TARDBP</label>
    </interactant>
    <organismsDiffer>false</organismsDiffer>
    <experiments>3</experiments>
</comment>
<comment type="interaction">
    <interactant intactId="EBI-2130308">
        <id>Q9UBS8</id>
    </interactant>
    <interactant intactId="EBI-743540">
        <id>P51668</id>
        <label>UBE2D1</label>
    </interactant>
    <organismsDiffer>false</organismsDiffer>
    <experiments>4</experiments>
</comment>
<comment type="interaction">
    <interactant intactId="EBI-2130308">
        <id>Q9UBS8</id>
    </interactant>
    <interactant intactId="EBI-745527">
        <id>Q9Y2X8</id>
        <label>UBE2D4</label>
    </interactant>
    <organismsDiffer>false</organismsDiffer>
    <experiments>5</experiments>
</comment>
<comment type="subcellular location">
    <subcellularLocation>
        <location evidence="13">Cytoplasm</location>
    </subcellularLocation>
    <subcellularLocation>
        <location evidence="13">Nucleus</location>
    </subcellularLocation>
</comment>
<comment type="alternative products">
    <event type="alternative splicing"/>
    <isoform>
        <id>Q9UBS8-1</id>
        <name>1</name>
        <sequence type="displayed"/>
    </isoform>
    <isoform>
        <id>Q9UBS8-2</id>
        <name>2</name>
        <sequence type="described" ref="VSP_045780"/>
    </isoform>
</comment>
<comment type="tissue specificity">
    <text evidence="5">Widely expressed.</text>
</comment>
<comment type="domain">
    <text evidence="19">The N-terminal destruction box (D-box) acts as a recognition signal for degradation via the ubiquitin-proteasome pathway.</text>
</comment>
<comment type="domain">
    <text evidence="1">Members of the RBR family are atypical E3 ligases. They interact with the E2 conjugating enzyme UBE2L3 and function like HECT-type E3 enzymes: they bind E2s via the first RING domain, but require an obligate trans-thiolation step during the ubiquitin transfer, requiring a conserved cysteine residue in the second RING domain.</text>
</comment>
<comment type="PTM">
    <text evidence="6">RING-type zinc finger-dependent and UBE2E2-dependent autoubiquitination.</text>
</comment>
<comment type="similarity">
    <text evidence="18">Belongs to the RBR family. RNF14 subfamily.</text>
</comment>
<comment type="caution">
    <text evidence="18">Lacks the His residue in the RING-type domain 2 that is one of the conserved features of the family.</text>
</comment>
<proteinExistence type="evidence at protein level"/>